<accession>B1X6H2</accession>
<reference key="1">
    <citation type="journal article" date="2008" name="J. Bacteriol.">
        <title>The complete genome sequence of Escherichia coli DH10B: insights into the biology of a laboratory workhorse.</title>
        <authorList>
            <person name="Durfee T."/>
            <person name="Nelson R."/>
            <person name="Baldwin S."/>
            <person name="Plunkett G. III"/>
            <person name="Burland V."/>
            <person name="Mau B."/>
            <person name="Petrosino J.F."/>
            <person name="Qin X."/>
            <person name="Muzny D.M."/>
            <person name="Ayele M."/>
            <person name="Gibbs R.A."/>
            <person name="Csorgo B."/>
            <person name="Posfai G."/>
            <person name="Weinstock G.M."/>
            <person name="Blattner F.R."/>
        </authorList>
    </citation>
    <scope>NUCLEOTIDE SEQUENCE [LARGE SCALE GENOMIC DNA]</scope>
    <source>
        <strain>K12 / DH10B</strain>
    </source>
</reference>
<protein>
    <recommendedName>
        <fullName evidence="1">Small ribosomal subunit protein uS10</fullName>
    </recommendedName>
    <alternativeName>
        <fullName evidence="2">30S ribosomal protein S10</fullName>
    </alternativeName>
</protein>
<dbReference type="EMBL" id="CP000948">
    <property type="protein sequence ID" value="ACB04382.1"/>
    <property type="molecule type" value="Genomic_DNA"/>
</dbReference>
<dbReference type="RefSeq" id="WP_001181004.1">
    <property type="nucleotide sequence ID" value="NC_010473.1"/>
</dbReference>
<dbReference type="SMR" id="B1X6H2"/>
<dbReference type="GeneID" id="93778666"/>
<dbReference type="KEGG" id="ecd:ECDH10B_3496"/>
<dbReference type="HOGENOM" id="CLU_122625_1_3_6"/>
<dbReference type="GO" id="GO:1990904">
    <property type="term" value="C:ribonucleoprotein complex"/>
    <property type="evidence" value="ECO:0007669"/>
    <property type="project" value="UniProtKB-KW"/>
</dbReference>
<dbReference type="GO" id="GO:0005840">
    <property type="term" value="C:ribosome"/>
    <property type="evidence" value="ECO:0007669"/>
    <property type="project" value="UniProtKB-KW"/>
</dbReference>
<dbReference type="GO" id="GO:0003735">
    <property type="term" value="F:structural constituent of ribosome"/>
    <property type="evidence" value="ECO:0007669"/>
    <property type="project" value="InterPro"/>
</dbReference>
<dbReference type="GO" id="GO:0000049">
    <property type="term" value="F:tRNA binding"/>
    <property type="evidence" value="ECO:0007669"/>
    <property type="project" value="UniProtKB-UniRule"/>
</dbReference>
<dbReference type="GO" id="GO:0006412">
    <property type="term" value="P:translation"/>
    <property type="evidence" value="ECO:0007669"/>
    <property type="project" value="UniProtKB-UniRule"/>
</dbReference>
<dbReference type="FunFam" id="3.30.70.600:FF:000001">
    <property type="entry name" value="30S ribosomal protein S10"/>
    <property type="match status" value="1"/>
</dbReference>
<dbReference type="Gene3D" id="3.30.70.600">
    <property type="entry name" value="Ribosomal protein S10 domain"/>
    <property type="match status" value="1"/>
</dbReference>
<dbReference type="HAMAP" id="MF_00508">
    <property type="entry name" value="Ribosomal_uS10"/>
    <property type="match status" value="1"/>
</dbReference>
<dbReference type="InterPro" id="IPR001848">
    <property type="entry name" value="Ribosomal_uS10"/>
</dbReference>
<dbReference type="InterPro" id="IPR018268">
    <property type="entry name" value="Ribosomal_uS10_CS"/>
</dbReference>
<dbReference type="InterPro" id="IPR027486">
    <property type="entry name" value="Ribosomal_uS10_dom"/>
</dbReference>
<dbReference type="InterPro" id="IPR036838">
    <property type="entry name" value="Ribosomal_uS10_dom_sf"/>
</dbReference>
<dbReference type="NCBIfam" id="NF001861">
    <property type="entry name" value="PRK00596.1"/>
    <property type="match status" value="1"/>
</dbReference>
<dbReference type="NCBIfam" id="TIGR01049">
    <property type="entry name" value="rpsJ_bact"/>
    <property type="match status" value="1"/>
</dbReference>
<dbReference type="PANTHER" id="PTHR11700">
    <property type="entry name" value="30S RIBOSOMAL PROTEIN S10 FAMILY MEMBER"/>
    <property type="match status" value="1"/>
</dbReference>
<dbReference type="Pfam" id="PF00338">
    <property type="entry name" value="Ribosomal_S10"/>
    <property type="match status" value="1"/>
</dbReference>
<dbReference type="PRINTS" id="PR00971">
    <property type="entry name" value="RIBOSOMALS10"/>
</dbReference>
<dbReference type="SMART" id="SM01403">
    <property type="entry name" value="Ribosomal_S10"/>
    <property type="match status" value="1"/>
</dbReference>
<dbReference type="SUPFAM" id="SSF54999">
    <property type="entry name" value="Ribosomal protein S10"/>
    <property type="match status" value="1"/>
</dbReference>
<dbReference type="PROSITE" id="PS00361">
    <property type="entry name" value="RIBOSOMAL_S10"/>
    <property type="match status" value="1"/>
</dbReference>
<evidence type="ECO:0000255" key="1">
    <source>
        <dbReference type="HAMAP-Rule" id="MF_00508"/>
    </source>
</evidence>
<evidence type="ECO:0000305" key="2"/>
<proteinExistence type="inferred from homology"/>
<comment type="function">
    <text evidence="1">Involved in the binding of tRNA to the ribosomes.</text>
</comment>
<comment type="subunit">
    <text evidence="1">Part of the 30S ribosomal subunit.</text>
</comment>
<comment type="similarity">
    <text evidence="1">Belongs to the universal ribosomal protein uS10 family.</text>
</comment>
<sequence length="103" mass="11736">MQNQRIRIRLKAFDHRLIDQATAEIVETAKRTGAQVRGPIPLPTRKERFTVLISPHVNKDARDQYEIRTHLRLVDIVEPTEKTVDALMRLDLAAGVDVQISLG</sequence>
<name>RS10_ECODH</name>
<gene>
    <name evidence="1" type="primary">rpsJ</name>
    <name type="ordered locus">ECDH10B_3496</name>
</gene>
<feature type="chain" id="PRO_1000127120" description="Small ribosomal subunit protein uS10">
    <location>
        <begin position="1"/>
        <end position="103"/>
    </location>
</feature>
<organism>
    <name type="scientific">Escherichia coli (strain K12 / DH10B)</name>
    <dbReference type="NCBI Taxonomy" id="316385"/>
    <lineage>
        <taxon>Bacteria</taxon>
        <taxon>Pseudomonadati</taxon>
        <taxon>Pseudomonadota</taxon>
        <taxon>Gammaproteobacteria</taxon>
        <taxon>Enterobacterales</taxon>
        <taxon>Enterobacteriaceae</taxon>
        <taxon>Escherichia</taxon>
    </lineage>
</organism>
<keyword id="KW-0687">Ribonucleoprotein</keyword>
<keyword id="KW-0689">Ribosomal protein</keyword>